<accession>Q12H06</accession>
<gene>
    <name evidence="1" type="primary">gatC</name>
    <name type="ordered locus">Bpro_0221</name>
</gene>
<name>GATC_POLSJ</name>
<protein>
    <recommendedName>
        <fullName evidence="1">Aspartyl/glutamyl-tRNA(Asn/Gln) amidotransferase subunit C</fullName>
        <shortName evidence="1">Asp/Glu-ADT subunit C</shortName>
        <ecNumber evidence="1">6.3.5.-</ecNumber>
    </recommendedName>
</protein>
<evidence type="ECO:0000255" key="1">
    <source>
        <dbReference type="HAMAP-Rule" id="MF_00122"/>
    </source>
</evidence>
<feature type="chain" id="PRO_1000016170" description="Aspartyl/glutamyl-tRNA(Asn/Gln) amidotransferase subunit C">
    <location>
        <begin position="1"/>
        <end position="99"/>
    </location>
</feature>
<keyword id="KW-0067">ATP-binding</keyword>
<keyword id="KW-0436">Ligase</keyword>
<keyword id="KW-0547">Nucleotide-binding</keyword>
<keyword id="KW-0648">Protein biosynthesis</keyword>
<keyword id="KW-1185">Reference proteome</keyword>
<dbReference type="EC" id="6.3.5.-" evidence="1"/>
<dbReference type="EMBL" id="CP000316">
    <property type="protein sequence ID" value="ABE42186.1"/>
    <property type="molecule type" value="Genomic_DNA"/>
</dbReference>
<dbReference type="RefSeq" id="WP_011481195.1">
    <property type="nucleotide sequence ID" value="NC_007948.1"/>
</dbReference>
<dbReference type="SMR" id="Q12H06"/>
<dbReference type="STRING" id="296591.Bpro_0221"/>
<dbReference type="KEGG" id="pol:Bpro_0221"/>
<dbReference type="eggNOG" id="COG0721">
    <property type="taxonomic scope" value="Bacteria"/>
</dbReference>
<dbReference type="HOGENOM" id="CLU_105899_1_0_4"/>
<dbReference type="OrthoDB" id="9794326at2"/>
<dbReference type="Proteomes" id="UP000001983">
    <property type="component" value="Chromosome"/>
</dbReference>
<dbReference type="GO" id="GO:0050566">
    <property type="term" value="F:asparaginyl-tRNA synthase (glutamine-hydrolyzing) activity"/>
    <property type="evidence" value="ECO:0007669"/>
    <property type="project" value="RHEA"/>
</dbReference>
<dbReference type="GO" id="GO:0005524">
    <property type="term" value="F:ATP binding"/>
    <property type="evidence" value="ECO:0007669"/>
    <property type="project" value="UniProtKB-KW"/>
</dbReference>
<dbReference type="GO" id="GO:0050567">
    <property type="term" value="F:glutaminyl-tRNA synthase (glutamine-hydrolyzing) activity"/>
    <property type="evidence" value="ECO:0007669"/>
    <property type="project" value="UniProtKB-UniRule"/>
</dbReference>
<dbReference type="GO" id="GO:0070681">
    <property type="term" value="P:glutaminyl-tRNAGln biosynthesis via transamidation"/>
    <property type="evidence" value="ECO:0007669"/>
    <property type="project" value="TreeGrafter"/>
</dbReference>
<dbReference type="GO" id="GO:0006450">
    <property type="term" value="P:regulation of translational fidelity"/>
    <property type="evidence" value="ECO:0007669"/>
    <property type="project" value="InterPro"/>
</dbReference>
<dbReference type="GO" id="GO:0006412">
    <property type="term" value="P:translation"/>
    <property type="evidence" value="ECO:0007669"/>
    <property type="project" value="UniProtKB-UniRule"/>
</dbReference>
<dbReference type="Gene3D" id="1.10.20.60">
    <property type="entry name" value="Glu-tRNAGln amidotransferase C subunit, N-terminal domain"/>
    <property type="match status" value="1"/>
</dbReference>
<dbReference type="HAMAP" id="MF_00122">
    <property type="entry name" value="GatC"/>
    <property type="match status" value="1"/>
</dbReference>
<dbReference type="InterPro" id="IPR036113">
    <property type="entry name" value="Asp/Glu-ADT_sf_sub_c"/>
</dbReference>
<dbReference type="InterPro" id="IPR003837">
    <property type="entry name" value="GatC"/>
</dbReference>
<dbReference type="NCBIfam" id="TIGR00135">
    <property type="entry name" value="gatC"/>
    <property type="match status" value="1"/>
</dbReference>
<dbReference type="PANTHER" id="PTHR15004">
    <property type="entry name" value="GLUTAMYL-TRNA(GLN) AMIDOTRANSFERASE SUBUNIT C, MITOCHONDRIAL"/>
    <property type="match status" value="1"/>
</dbReference>
<dbReference type="PANTHER" id="PTHR15004:SF0">
    <property type="entry name" value="GLUTAMYL-TRNA(GLN) AMIDOTRANSFERASE SUBUNIT C, MITOCHONDRIAL"/>
    <property type="match status" value="1"/>
</dbReference>
<dbReference type="Pfam" id="PF02686">
    <property type="entry name" value="GatC"/>
    <property type="match status" value="1"/>
</dbReference>
<dbReference type="SUPFAM" id="SSF141000">
    <property type="entry name" value="Glu-tRNAGln amidotransferase C subunit"/>
    <property type="match status" value="1"/>
</dbReference>
<reference key="1">
    <citation type="journal article" date="2008" name="Appl. Environ. Microbiol.">
        <title>The genome of Polaromonas sp. strain JS666: insights into the evolution of a hydrocarbon- and xenobiotic-degrading bacterium, and features of relevance to biotechnology.</title>
        <authorList>
            <person name="Mattes T.E."/>
            <person name="Alexander A.K."/>
            <person name="Richardson P.M."/>
            <person name="Munk A.C."/>
            <person name="Han C.S."/>
            <person name="Stothard P."/>
            <person name="Coleman N.V."/>
        </authorList>
    </citation>
    <scope>NUCLEOTIDE SEQUENCE [LARGE SCALE GENOMIC DNA]</scope>
    <source>
        <strain>JS666 / ATCC BAA-500</strain>
    </source>
</reference>
<sequence length="99" mass="10714">MALTSQDIARVANLARLELRPEETEHTLSQLNGFFALVEQMAAVNTDGVEPLAHPAAVIGEVALRLRDDIASEPNQREASQVSAPAVERGLFLVPKVIE</sequence>
<organism>
    <name type="scientific">Polaromonas sp. (strain JS666 / ATCC BAA-500)</name>
    <dbReference type="NCBI Taxonomy" id="296591"/>
    <lineage>
        <taxon>Bacteria</taxon>
        <taxon>Pseudomonadati</taxon>
        <taxon>Pseudomonadota</taxon>
        <taxon>Betaproteobacteria</taxon>
        <taxon>Burkholderiales</taxon>
        <taxon>Comamonadaceae</taxon>
        <taxon>Polaromonas</taxon>
    </lineage>
</organism>
<comment type="function">
    <text evidence="1">Allows the formation of correctly charged Asn-tRNA(Asn) or Gln-tRNA(Gln) through the transamidation of misacylated Asp-tRNA(Asn) or Glu-tRNA(Gln) in organisms which lack either or both of asparaginyl-tRNA or glutaminyl-tRNA synthetases. The reaction takes place in the presence of glutamine and ATP through an activated phospho-Asp-tRNA(Asn) or phospho-Glu-tRNA(Gln).</text>
</comment>
<comment type="catalytic activity">
    <reaction evidence="1">
        <text>L-glutamyl-tRNA(Gln) + L-glutamine + ATP + H2O = L-glutaminyl-tRNA(Gln) + L-glutamate + ADP + phosphate + H(+)</text>
        <dbReference type="Rhea" id="RHEA:17521"/>
        <dbReference type="Rhea" id="RHEA-COMP:9681"/>
        <dbReference type="Rhea" id="RHEA-COMP:9684"/>
        <dbReference type="ChEBI" id="CHEBI:15377"/>
        <dbReference type="ChEBI" id="CHEBI:15378"/>
        <dbReference type="ChEBI" id="CHEBI:29985"/>
        <dbReference type="ChEBI" id="CHEBI:30616"/>
        <dbReference type="ChEBI" id="CHEBI:43474"/>
        <dbReference type="ChEBI" id="CHEBI:58359"/>
        <dbReference type="ChEBI" id="CHEBI:78520"/>
        <dbReference type="ChEBI" id="CHEBI:78521"/>
        <dbReference type="ChEBI" id="CHEBI:456216"/>
    </reaction>
</comment>
<comment type="catalytic activity">
    <reaction evidence="1">
        <text>L-aspartyl-tRNA(Asn) + L-glutamine + ATP + H2O = L-asparaginyl-tRNA(Asn) + L-glutamate + ADP + phosphate + 2 H(+)</text>
        <dbReference type="Rhea" id="RHEA:14513"/>
        <dbReference type="Rhea" id="RHEA-COMP:9674"/>
        <dbReference type="Rhea" id="RHEA-COMP:9677"/>
        <dbReference type="ChEBI" id="CHEBI:15377"/>
        <dbReference type="ChEBI" id="CHEBI:15378"/>
        <dbReference type="ChEBI" id="CHEBI:29985"/>
        <dbReference type="ChEBI" id="CHEBI:30616"/>
        <dbReference type="ChEBI" id="CHEBI:43474"/>
        <dbReference type="ChEBI" id="CHEBI:58359"/>
        <dbReference type="ChEBI" id="CHEBI:78515"/>
        <dbReference type="ChEBI" id="CHEBI:78516"/>
        <dbReference type="ChEBI" id="CHEBI:456216"/>
    </reaction>
</comment>
<comment type="subunit">
    <text evidence="1">Heterotrimer of A, B and C subunits.</text>
</comment>
<comment type="similarity">
    <text evidence="1">Belongs to the GatC family.</text>
</comment>
<proteinExistence type="inferred from homology"/>